<dbReference type="EC" id="3.6.1.-" evidence="1"/>
<dbReference type="EMBL" id="CP000026">
    <property type="protein sequence ID" value="AAV76403.1"/>
    <property type="molecule type" value="Genomic_DNA"/>
</dbReference>
<dbReference type="RefSeq" id="WP_000084033.1">
    <property type="nucleotide sequence ID" value="NC_006511.1"/>
</dbReference>
<dbReference type="SMR" id="Q5PCQ1"/>
<dbReference type="KEGG" id="spt:SPA0392"/>
<dbReference type="HOGENOM" id="CLU_062658_6_0_6"/>
<dbReference type="Proteomes" id="UP000008185">
    <property type="component" value="Chromosome"/>
</dbReference>
<dbReference type="GO" id="GO:0005829">
    <property type="term" value="C:cytosol"/>
    <property type="evidence" value="ECO:0007669"/>
    <property type="project" value="TreeGrafter"/>
</dbReference>
<dbReference type="GO" id="GO:0016818">
    <property type="term" value="F:hydrolase activity, acting on acid anhydrides, in phosphorus-containing anhydrides"/>
    <property type="evidence" value="ECO:0007669"/>
    <property type="project" value="InterPro"/>
</dbReference>
<dbReference type="GO" id="GO:0046872">
    <property type="term" value="F:metal ion binding"/>
    <property type="evidence" value="ECO:0007669"/>
    <property type="project" value="UniProtKB-KW"/>
</dbReference>
<dbReference type="GO" id="GO:0006753">
    <property type="term" value="P:nucleoside phosphate metabolic process"/>
    <property type="evidence" value="ECO:0007669"/>
    <property type="project" value="TreeGrafter"/>
</dbReference>
<dbReference type="GO" id="GO:0019693">
    <property type="term" value="P:ribose phosphate metabolic process"/>
    <property type="evidence" value="ECO:0007669"/>
    <property type="project" value="TreeGrafter"/>
</dbReference>
<dbReference type="CDD" id="cd24157">
    <property type="entry name" value="NUDIX_GDPMK"/>
    <property type="match status" value="1"/>
</dbReference>
<dbReference type="FunFam" id="3.90.79.10:FF:000010">
    <property type="entry name" value="GDP-mannose pyrophosphatase NudK"/>
    <property type="match status" value="1"/>
</dbReference>
<dbReference type="Gene3D" id="3.90.79.10">
    <property type="entry name" value="Nucleoside Triphosphate Pyrophosphohydrolase"/>
    <property type="match status" value="1"/>
</dbReference>
<dbReference type="InterPro" id="IPR004385">
    <property type="entry name" value="NDP_pyrophosphatase"/>
</dbReference>
<dbReference type="InterPro" id="IPR015797">
    <property type="entry name" value="NUDIX_hydrolase-like_dom_sf"/>
</dbReference>
<dbReference type="InterPro" id="IPR000086">
    <property type="entry name" value="NUDIX_hydrolase_dom"/>
</dbReference>
<dbReference type="NCBIfam" id="TIGR00052">
    <property type="entry name" value="nudix-type nucleoside diphosphatase, YffH/AdpP family"/>
    <property type="match status" value="1"/>
</dbReference>
<dbReference type="NCBIfam" id="NF011585">
    <property type="entry name" value="PRK15009.1"/>
    <property type="match status" value="1"/>
</dbReference>
<dbReference type="PANTHER" id="PTHR11839:SF18">
    <property type="entry name" value="NUDIX HYDROLASE DOMAIN-CONTAINING PROTEIN"/>
    <property type="match status" value="1"/>
</dbReference>
<dbReference type="PANTHER" id="PTHR11839">
    <property type="entry name" value="UDP/ADP-SUGAR PYROPHOSPHATASE"/>
    <property type="match status" value="1"/>
</dbReference>
<dbReference type="Pfam" id="PF00293">
    <property type="entry name" value="NUDIX"/>
    <property type="match status" value="1"/>
</dbReference>
<dbReference type="SUPFAM" id="SSF55811">
    <property type="entry name" value="Nudix"/>
    <property type="match status" value="1"/>
</dbReference>
<dbReference type="PROSITE" id="PS51462">
    <property type="entry name" value="NUDIX"/>
    <property type="match status" value="1"/>
</dbReference>
<name>NUDK_SALPA</name>
<protein>
    <recommendedName>
        <fullName>GDP-mannose pyrophosphatase</fullName>
        <ecNumber evidence="1">3.6.1.-</ecNumber>
    </recommendedName>
    <alternativeName>
        <fullName>GDP-mannose hydrolase</fullName>
    </alternativeName>
    <alternativeName>
        <fullName>GDPMK</fullName>
    </alternativeName>
</protein>
<organism>
    <name type="scientific">Salmonella paratyphi A (strain ATCC 9150 / SARB42)</name>
    <dbReference type="NCBI Taxonomy" id="295319"/>
    <lineage>
        <taxon>Bacteria</taxon>
        <taxon>Pseudomonadati</taxon>
        <taxon>Pseudomonadota</taxon>
        <taxon>Gammaproteobacteria</taxon>
        <taxon>Enterobacterales</taxon>
        <taxon>Enterobacteriaceae</taxon>
        <taxon>Salmonella</taxon>
    </lineage>
</organism>
<gene>
    <name type="primary">nudK</name>
    <name type="ordered locus">SPA0392</name>
</gene>
<comment type="function">
    <text evidence="1">Nucleoside diphosphate sugar hydrolase that hydrolyzes GDP-mannose as its preferred substrate, yielding GMP and mannose-1-phosphate.</text>
</comment>
<comment type="catalytic activity">
    <reaction evidence="1">
        <text>GDP-alpha-D-mannose + H2O = alpha-D-mannose 1-phosphate + GMP + 2 H(+)</text>
        <dbReference type="Rhea" id="RHEA:27978"/>
        <dbReference type="ChEBI" id="CHEBI:15377"/>
        <dbReference type="ChEBI" id="CHEBI:15378"/>
        <dbReference type="ChEBI" id="CHEBI:57527"/>
        <dbReference type="ChEBI" id="CHEBI:58115"/>
        <dbReference type="ChEBI" id="CHEBI:58409"/>
    </reaction>
</comment>
<comment type="cofactor">
    <cofactor evidence="1">
        <name>Mg(2+)</name>
        <dbReference type="ChEBI" id="CHEBI:18420"/>
    </cofactor>
</comment>
<comment type="subunit">
    <text evidence="1">Homodimer.</text>
</comment>
<comment type="domain">
    <text evidence="1">In the dimer, the N-terminal domains are swapped between the two monomers, such that residues of both chains contribute to the active site.</text>
</comment>
<comment type="similarity">
    <text evidence="3">Belongs to the Nudix hydrolase family. NudK subfamily.</text>
</comment>
<keyword id="KW-0378">Hydrolase</keyword>
<keyword id="KW-0460">Magnesium</keyword>
<keyword id="KW-0479">Metal-binding</keyword>
<proteinExistence type="inferred from homology"/>
<accession>Q5PCQ1</accession>
<reference key="1">
    <citation type="journal article" date="2004" name="Nat. Genet.">
        <title>Comparison of genome degradation in Paratyphi A and Typhi, human-restricted serovars of Salmonella enterica that cause typhoid.</title>
        <authorList>
            <person name="McClelland M."/>
            <person name="Sanderson K.E."/>
            <person name="Clifton S.W."/>
            <person name="Latreille P."/>
            <person name="Porwollik S."/>
            <person name="Sabo A."/>
            <person name="Meyer R."/>
            <person name="Bieri T."/>
            <person name="Ozersky P."/>
            <person name="McLellan M."/>
            <person name="Harkins C.R."/>
            <person name="Wang C."/>
            <person name="Nguyen C."/>
            <person name="Berghoff A."/>
            <person name="Elliott G."/>
            <person name="Kohlberg S."/>
            <person name="Strong C."/>
            <person name="Du F."/>
            <person name="Carter J."/>
            <person name="Kremizki C."/>
            <person name="Layman D."/>
            <person name="Leonard S."/>
            <person name="Sun H."/>
            <person name="Fulton L."/>
            <person name="Nash W."/>
            <person name="Miner T."/>
            <person name="Minx P."/>
            <person name="Delehaunty K."/>
            <person name="Fronick C."/>
            <person name="Magrini V."/>
            <person name="Nhan M."/>
            <person name="Warren W."/>
            <person name="Florea L."/>
            <person name="Spieth J."/>
            <person name="Wilson R.K."/>
        </authorList>
    </citation>
    <scope>NUCLEOTIDE SEQUENCE [LARGE SCALE GENOMIC DNA]</scope>
    <source>
        <strain>ATCC 9150 / SARB42</strain>
    </source>
</reference>
<evidence type="ECO:0000250" key="1">
    <source>
        <dbReference type="UniProtKB" id="P37128"/>
    </source>
</evidence>
<evidence type="ECO:0000255" key="2">
    <source>
        <dbReference type="PROSITE-ProRule" id="PRU00794"/>
    </source>
</evidence>
<evidence type="ECO:0000305" key="3"/>
<sequence>MSQTITLIKDKILSDNYFTLRNITYDLTRRNGEVIRHKREVYDRGNGATILLYNSTKKTVLLVRQFRVATWVNGNQDGMLIETCAGLLDNDEPEVCIRKEAIEETGYDVGEVRKIFELYMSPGGVTELIHFFIAEYHDSERASIGGGVEDEEIEVLELPFSRALEMVRSGEIRDGKTVLLLNYLQTSHLMD</sequence>
<feature type="chain" id="PRO_0000342495" description="GDP-mannose pyrophosphatase">
    <location>
        <begin position="1"/>
        <end position="191"/>
    </location>
</feature>
<feature type="domain" description="Nudix hydrolase" evidence="2">
    <location>
        <begin position="43"/>
        <end position="180"/>
    </location>
</feature>
<feature type="short sequence motif" description="Nudix box">
    <location>
        <begin position="86"/>
        <end position="106"/>
    </location>
</feature>
<feature type="binding site" description="in other chain" evidence="1">
    <location>
        <position position="17"/>
    </location>
    <ligand>
        <name>GDP-alpha-D-mannose</name>
        <dbReference type="ChEBI" id="CHEBI:57527"/>
        <note>ligand shared between dimeric partners</note>
    </ligand>
</feature>
<feature type="binding site" evidence="1">
    <location>
        <begin position="38"/>
        <end position="40"/>
    </location>
    <ligand>
        <name>GDP-alpha-D-mannose</name>
        <dbReference type="ChEBI" id="CHEBI:57527"/>
        <note>ligand shared between dimeric partners</note>
    </ligand>
</feature>
<feature type="binding site" description="in other chain" evidence="1">
    <location>
        <position position="67"/>
    </location>
    <ligand>
        <name>GDP-alpha-D-mannose</name>
        <dbReference type="ChEBI" id="CHEBI:57527"/>
        <note>ligand shared between dimeric partners</note>
    </ligand>
</feature>
<feature type="binding site" description="in other chain" evidence="1">
    <location>
        <begin position="85"/>
        <end position="87"/>
    </location>
    <ligand>
        <name>GDP-alpha-D-mannose</name>
        <dbReference type="ChEBI" id="CHEBI:57527"/>
        <note>ligand shared between dimeric partners</note>
    </ligand>
</feature>
<feature type="binding site" evidence="1">
    <location>
        <position position="85"/>
    </location>
    <ligand>
        <name>Mg(2+)</name>
        <dbReference type="ChEBI" id="CHEBI:18420"/>
        <label>1</label>
    </ligand>
</feature>
<feature type="binding site" evidence="1">
    <location>
        <position position="100"/>
    </location>
    <ligand>
        <name>Mg(2+)</name>
        <dbReference type="ChEBI" id="CHEBI:18420"/>
        <label>2</label>
    </ligand>
</feature>
<feature type="binding site" description="in other chain" evidence="1">
    <location>
        <position position="104"/>
    </location>
    <ligand>
        <name>GDP-alpha-D-mannose</name>
        <dbReference type="ChEBI" id="CHEBI:57527"/>
        <note>ligand shared between dimeric partners</note>
    </ligand>
</feature>
<feature type="binding site" evidence="1">
    <location>
        <position position="104"/>
    </location>
    <ligand>
        <name>Mg(2+)</name>
        <dbReference type="ChEBI" id="CHEBI:18420"/>
        <label>1</label>
    </ligand>
</feature>
<feature type="binding site" evidence="1">
    <location>
        <position position="104"/>
    </location>
    <ligand>
        <name>Mg(2+)</name>
        <dbReference type="ChEBI" id="CHEBI:18420"/>
        <label>2</label>
    </ligand>
</feature>
<feature type="binding site" description="in other chain" evidence="1">
    <location>
        <position position="127"/>
    </location>
    <ligand>
        <name>GDP-alpha-D-mannose</name>
        <dbReference type="ChEBI" id="CHEBI:57527"/>
        <note>ligand shared between dimeric partners</note>
    </ligand>
</feature>
<feature type="binding site" description="in other chain" evidence="1">
    <location>
        <begin position="150"/>
        <end position="151"/>
    </location>
    <ligand>
        <name>GDP-alpha-D-mannose</name>
        <dbReference type="ChEBI" id="CHEBI:57527"/>
        <note>ligand shared between dimeric partners</note>
    </ligand>
</feature>
<feature type="binding site" evidence="1">
    <location>
        <position position="151"/>
    </location>
    <ligand>
        <name>Mg(2+)</name>
        <dbReference type="ChEBI" id="CHEBI:18420"/>
        <label>2</label>
    </ligand>
</feature>
<feature type="binding site" description="in other chain" evidence="1">
    <location>
        <position position="176"/>
    </location>
    <ligand>
        <name>GDP-alpha-D-mannose</name>
        <dbReference type="ChEBI" id="CHEBI:57527"/>
        <note>ligand shared between dimeric partners</note>
    </ligand>
</feature>